<keyword id="KW-1185">Reference proteome</keyword>
<keyword id="KW-0687">Ribonucleoprotein</keyword>
<keyword id="KW-0689">Ribosomal protein</keyword>
<keyword id="KW-0694">RNA-binding</keyword>
<keyword id="KW-0699">rRNA-binding</keyword>
<accession>B1WQR3</accession>
<proteinExistence type="inferred from homology"/>
<protein>
    <recommendedName>
        <fullName evidence="1">Large ribosomal subunit protein uL2</fullName>
    </recommendedName>
    <alternativeName>
        <fullName evidence="3">50S ribosomal protein L2</fullName>
    </alternativeName>
</protein>
<name>RL2_CROS5</name>
<gene>
    <name evidence="1" type="primary">rplB</name>
    <name evidence="1" type="synonym">rpl2</name>
    <name type="ordered locus">cce_4017</name>
</gene>
<evidence type="ECO:0000255" key="1">
    <source>
        <dbReference type="HAMAP-Rule" id="MF_01320"/>
    </source>
</evidence>
<evidence type="ECO:0000256" key="2">
    <source>
        <dbReference type="SAM" id="MobiDB-lite"/>
    </source>
</evidence>
<evidence type="ECO:0000305" key="3"/>
<sequence>MGIRTYRPYTPGTRQASVSDFADITKPKPEKSLTTYKHNKKGRNNRGVITSRHRGGGHKRLYRIVDFKRDKYGVPAKVAAIEYDPNRNARIALLFYQDGEKRYILAPAGITVGTEVISGEDSPFEVGNALPLYKIPLGTEVHNIELVAGKGGQMVRAAGAAAQVVAKEGDYVTLRLPSKEVRMVRKECYATIGRVGNTEARNIKLGKAGRTRHLGRRPHVRGSVMNPVDHPHGGGEGRAPVGRSGPMTPWGKPALGAKTRNKKKASSRLIVRRRR</sequence>
<organism>
    <name type="scientific">Crocosphaera subtropica (strain ATCC 51142 / BH68)</name>
    <name type="common">Cyanothece sp. (strain ATCC 51142)</name>
    <dbReference type="NCBI Taxonomy" id="43989"/>
    <lineage>
        <taxon>Bacteria</taxon>
        <taxon>Bacillati</taxon>
        <taxon>Cyanobacteriota</taxon>
        <taxon>Cyanophyceae</taxon>
        <taxon>Oscillatoriophycideae</taxon>
        <taxon>Chroococcales</taxon>
        <taxon>Aphanothecaceae</taxon>
        <taxon>Crocosphaera</taxon>
        <taxon>Crocosphaera subtropica</taxon>
    </lineage>
</organism>
<comment type="function">
    <text evidence="1">One of the primary rRNA binding proteins. Required for association of the 30S and 50S subunits to form the 70S ribosome, for tRNA binding and peptide bond formation. It has been suggested to have peptidyltransferase activity; this is somewhat controversial. Makes several contacts with the 16S rRNA in the 70S ribosome.</text>
</comment>
<comment type="subunit">
    <text evidence="1">Part of the 50S ribosomal subunit. Forms a bridge to the 30S subunit in the 70S ribosome.</text>
</comment>
<comment type="similarity">
    <text evidence="1">Belongs to the universal ribosomal protein uL2 family.</text>
</comment>
<dbReference type="EMBL" id="CP000806">
    <property type="protein sequence ID" value="ACB53365.1"/>
    <property type="molecule type" value="Genomic_DNA"/>
</dbReference>
<dbReference type="RefSeq" id="WP_009543893.1">
    <property type="nucleotide sequence ID" value="NC_010546.1"/>
</dbReference>
<dbReference type="SMR" id="B1WQR3"/>
<dbReference type="STRING" id="43989.cce_4017"/>
<dbReference type="KEGG" id="cyt:cce_4017"/>
<dbReference type="eggNOG" id="COG0090">
    <property type="taxonomic scope" value="Bacteria"/>
</dbReference>
<dbReference type="HOGENOM" id="CLU_036235_2_1_3"/>
<dbReference type="OrthoDB" id="9778722at2"/>
<dbReference type="Proteomes" id="UP000001203">
    <property type="component" value="Chromosome circular"/>
</dbReference>
<dbReference type="GO" id="GO:0015934">
    <property type="term" value="C:large ribosomal subunit"/>
    <property type="evidence" value="ECO:0007669"/>
    <property type="project" value="InterPro"/>
</dbReference>
<dbReference type="GO" id="GO:0019843">
    <property type="term" value="F:rRNA binding"/>
    <property type="evidence" value="ECO:0007669"/>
    <property type="project" value="UniProtKB-UniRule"/>
</dbReference>
<dbReference type="GO" id="GO:0003735">
    <property type="term" value="F:structural constituent of ribosome"/>
    <property type="evidence" value="ECO:0007669"/>
    <property type="project" value="InterPro"/>
</dbReference>
<dbReference type="GO" id="GO:0016740">
    <property type="term" value="F:transferase activity"/>
    <property type="evidence" value="ECO:0007669"/>
    <property type="project" value="InterPro"/>
</dbReference>
<dbReference type="GO" id="GO:0006412">
    <property type="term" value="P:translation"/>
    <property type="evidence" value="ECO:0007669"/>
    <property type="project" value="UniProtKB-UniRule"/>
</dbReference>
<dbReference type="FunFam" id="2.30.30.30:FF:000001">
    <property type="entry name" value="50S ribosomal protein L2"/>
    <property type="match status" value="1"/>
</dbReference>
<dbReference type="FunFam" id="2.40.50.140:FF:000003">
    <property type="entry name" value="50S ribosomal protein L2"/>
    <property type="match status" value="1"/>
</dbReference>
<dbReference type="FunFam" id="4.10.950.10:FF:000001">
    <property type="entry name" value="50S ribosomal protein L2"/>
    <property type="match status" value="1"/>
</dbReference>
<dbReference type="Gene3D" id="2.30.30.30">
    <property type="match status" value="1"/>
</dbReference>
<dbReference type="Gene3D" id="2.40.50.140">
    <property type="entry name" value="Nucleic acid-binding proteins"/>
    <property type="match status" value="1"/>
</dbReference>
<dbReference type="Gene3D" id="4.10.950.10">
    <property type="entry name" value="Ribosomal protein L2, domain 3"/>
    <property type="match status" value="1"/>
</dbReference>
<dbReference type="HAMAP" id="MF_01320_B">
    <property type="entry name" value="Ribosomal_uL2_B"/>
    <property type="match status" value="1"/>
</dbReference>
<dbReference type="InterPro" id="IPR012340">
    <property type="entry name" value="NA-bd_OB-fold"/>
</dbReference>
<dbReference type="InterPro" id="IPR014722">
    <property type="entry name" value="Rib_uL2_dom2"/>
</dbReference>
<dbReference type="InterPro" id="IPR002171">
    <property type="entry name" value="Ribosomal_uL2"/>
</dbReference>
<dbReference type="InterPro" id="IPR005880">
    <property type="entry name" value="Ribosomal_uL2_bac/org-type"/>
</dbReference>
<dbReference type="InterPro" id="IPR022669">
    <property type="entry name" value="Ribosomal_uL2_C"/>
</dbReference>
<dbReference type="InterPro" id="IPR022671">
    <property type="entry name" value="Ribosomal_uL2_CS"/>
</dbReference>
<dbReference type="InterPro" id="IPR014726">
    <property type="entry name" value="Ribosomal_uL2_dom3"/>
</dbReference>
<dbReference type="InterPro" id="IPR022666">
    <property type="entry name" value="Ribosomal_uL2_RNA-bd_dom"/>
</dbReference>
<dbReference type="InterPro" id="IPR008991">
    <property type="entry name" value="Translation_prot_SH3-like_sf"/>
</dbReference>
<dbReference type="NCBIfam" id="TIGR01171">
    <property type="entry name" value="rplB_bact"/>
    <property type="match status" value="1"/>
</dbReference>
<dbReference type="PANTHER" id="PTHR13691:SF5">
    <property type="entry name" value="LARGE RIBOSOMAL SUBUNIT PROTEIN UL2M"/>
    <property type="match status" value="1"/>
</dbReference>
<dbReference type="PANTHER" id="PTHR13691">
    <property type="entry name" value="RIBOSOMAL PROTEIN L2"/>
    <property type="match status" value="1"/>
</dbReference>
<dbReference type="Pfam" id="PF00181">
    <property type="entry name" value="Ribosomal_L2"/>
    <property type="match status" value="1"/>
</dbReference>
<dbReference type="Pfam" id="PF03947">
    <property type="entry name" value="Ribosomal_L2_C"/>
    <property type="match status" value="1"/>
</dbReference>
<dbReference type="PIRSF" id="PIRSF002158">
    <property type="entry name" value="Ribosomal_L2"/>
    <property type="match status" value="1"/>
</dbReference>
<dbReference type="SMART" id="SM01383">
    <property type="entry name" value="Ribosomal_L2"/>
    <property type="match status" value="1"/>
</dbReference>
<dbReference type="SMART" id="SM01382">
    <property type="entry name" value="Ribosomal_L2_C"/>
    <property type="match status" value="1"/>
</dbReference>
<dbReference type="SUPFAM" id="SSF50249">
    <property type="entry name" value="Nucleic acid-binding proteins"/>
    <property type="match status" value="1"/>
</dbReference>
<dbReference type="SUPFAM" id="SSF50104">
    <property type="entry name" value="Translation proteins SH3-like domain"/>
    <property type="match status" value="1"/>
</dbReference>
<dbReference type="PROSITE" id="PS00467">
    <property type="entry name" value="RIBOSOMAL_L2"/>
    <property type="match status" value="1"/>
</dbReference>
<reference key="1">
    <citation type="journal article" date="2008" name="Proc. Natl. Acad. Sci. U.S.A.">
        <title>The genome of Cyanothece 51142, a unicellular diazotrophic cyanobacterium important in the marine nitrogen cycle.</title>
        <authorList>
            <person name="Welsh E.A."/>
            <person name="Liberton M."/>
            <person name="Stoeckel J."/>
            <person name="Loh T."/>
            <person name="Elvitigala T."/>
            <person name="Wang C."/>
            <person name="Wollam A."/>
            <person name="Fulton R.S."/>
            <person name="Clifton S.W."/>
            <person name="Jacobs J.M."/>
            <person name="Aurora R."/>
            <person name="Ghosh B.K."/>
            <person name="Sherman L.A."/>
            <person name="Smith R.D."/>
            <person name="Wilson R.K."/>
            <person name="Pakrasi H.B."/>
        </authorList>
    </citation>
    <scope>NUCLEOTIDE SEQUENCE [LARGE SCALE GENOMIC DNA]</scope>
    <source>
        <strain>ATCC 51142 / BH68</strain>
    </source>
</reference>
<feature type="chain" id="PRO_1000165741" description="Large ribosomal subunit protein uL2">
    <location>
        <begin position="1"/>
        <end position="275"/>
    </location>
</feature>
<feature type="region of interest" description="Disordered" evidence="2">
    <location>
        <begin position="1"/>
        <end position="55"/>
    </location>
</feature>
<feature type="region of interest" description="Disordered" evidence="2">
    <location>
        <begin position="218"/>
        <end position="275"/>
    </location>
</feature>
<feature type="compositionally biased region" description="Basic residues" evidence="2">
    <location>
        <begin position="259"/>
        <end position="275"/>
    </location>
</feature>